<proteinExistence type="inferred from homology"/>
<dbReference type="EC" id="2.3.1.117" evidence="1"/>
<dbReference type="EMBL" id="CP000744">
    <property type="protein sequence ID" value="ABR84114.1"/>
    <property type="molecule type" value="Genomic_DNA"/>
</dbReference>
<dbReference type="RefSeq" id="WP_012074685.1">
    <property type="nucleotide sequence ID" value="NC_009656.1"/>
</dbReference>
<dbReference type="SMR" id="A6V1C2"/>
<dbReference type="KEGG" id="pap:PSPA7_1473"/>
<dbReference type="HOGENOM" id="CLU_057490_0_0_6"/>
<dbReference type="UniPathway" id="UPA00034">
    <property type="reaction ID" value="UER00019"/>
</dbReference>
<dbReference type="Proteomes" id="UP000001582">
    <property type="component" value="Chromosome"/>
</dbReference>
<dbReference type="GO" id="GO:0005737">
    <property type="term" value="C:cytoplasm"/>
    <property type="evidence" value="ECO:0007669"/>
    <property type="project" value="UniProtKB-SubCell"/>
</dbReference>
<dbReference type="GO" id="GO:0008666">
    <property type="term" value="F:2,3,4,5-tetrahydropyridine-2,6-dicarboxylate N-succinyltransferase activity"/>
    <property type="evidence" value="ECO:0007669"/>
    <property type="project" value="UniProtKB-UniRule"/>
</dbReference>
<dbReference type="GO" id="GO:0000287">
    <property type="term" value="F:magnesium ion binding"/>
    <property type="evidence" value="ECO:0007669"/>
    <property type="project" value="UniProtKB-UniRule"/>
</dbReference>
<dbReference type="GO" id="GO:0019877">
    <property type="term" value="P:diaminopimelate biosynthetic process"/>
    <property type="evidence" value="ECO:0007669"/>
    <property type="project" value="UniProtKB-UniRule"/>
</dbReference>
<dbReference type="GO" id="GO:0009089">
    <property type="term" value="P:lysine biosynthetic process via diaminopimelate"/>
    <property type="evidence" value="ECO:0007669"/>
    <property type="project" value="UniProtKB-UniRule"/>
</dbReference>
<dbReference type="CDD" id="cd04649">
    <property type="entry name" value="LbH_THP_succinylT_putative"/>
    <property type="match status" value="1"/>
</dbReference>
<dbReference type="FunFam" id="2.160.10.10:FF:000009">
    <property type="entry name" value="2,3,4,5-tetrahydropyridine-2,6-dicarboxylate N-succinyltransferase"/>
    <property type="match status" value="1"/>
</dbReference>
<dbReference type="FunFam" id="3.30.60.70:FF:000001">
    <property type="entry name" value="2,3,4,5-tetrahydropyridine-2,6-dicarboxylate N-succinyltransferase"/>
    <property type="match status" value="1"/>
</dbReference>
<dbReference type="Gene3D" id="3.30.70.2010">
    <property type="match status" value="1"/>
</dbReference>
<dbReference type="Gene3D" id="2.160.10.10">
    <property type="entry name" value="Hexapeptide repeat proteins"/>
    <property type="match status" value="1"/>
</dbReference>
<dbReference type="Gene3D" id="3.30.60.70">
    <property type="entry name" value="Trimeric LpxA-like enzymes"/>
    <property type="match status" value="1"/>
</dbReference>
<dbReference type="HAMAP" id="MF_02122">
    <property type="entry name" value="DapD_type2"/>
    <property type="match status" value="1"/>
</dbReference>
<dbReference type="InterPro" id="IPR019876">
    <property type="entry name" value="DapD_gammaproteobac"/>
</dbReference>
<dbReference type="InterPro" id="IPR001451">
    <property type="entry name" value="Hexapep"/>
</dbReference>
<dbReference type="InterPro" id="IPR032784">
    <property type="entry name" value="THDPS_M"/>
</dbReference>
<dbReference type="InterPro" id="IPR038361">
    <property type="entry name" value="THDPS_M_sf"/>
</dbReference>
<dbReference type="InterPro" id="IPR011004">
    <property type="entry name" value="Trimer_LpxA-like_sf"/>
</dbReference>
<dbReference type="InterPro" id="IPR026586">
    <property type="entry name" value="Type2_DapD"/>
</dbReference>
<dbReference type="NCBIfam" id="TIGR03536">
    <property type="entry name" value="DapD_gpp"/>
    <property type="match status" value="1"/>
</dbReference>
<dbReference type="Pfam" id="PF14602">
    <property type="entry name" value="Hexapep_2"/>
    <property type="match status" value="1"/>
</dbReference>
<dbReference type="Pfam" id="PF14789">
    <property type="entry name" value="THDPS_M"/>
    <property type="match status" value="1"/>
</dbReference>
<dbReference type="Pfam" id="PF14790">
    <property type="entry name" value="THDPS_N"/>
    <property type="match status" value="1"/>
</dbReference>
<dbReference type="SUPFAM" id="SSF51161">
    <property type="entry name" value="Trimeric LpxA-like enzymes"/>
    <property type="match status" value="1"/>
</dbReference>
<keyword id="KW-0012">Acyltransferase</keyword>
<keyword id="KW-0028">Amino-acid biosynthesis</keyword>
<keyword id="KW-0963">Cytoplasm</keyword>
<keyword id="KW-0220">Diaminopimelate biosynthesis</keyword>
<keyword id="KW-0457">Lysine biosynthesis</keyword>
<keyword id="KW-0460">Magnesium</keyword>
<keyword id="KW-0479">Metal-binding</keyword>
<keyword id="KW-0808">Transferase</keyword>
<organism>
    <name type="scientific">Pseudomonas paraeruginosa (strain DSM 24068 / PA7)</name>
    <name type="common">Pseudomonas aeruginosa (strain PA7)</name>
    <dbReference type="NCBI Taxonomy" id="381754"/>
    <lineage>
        <taxon>Bacteria</taxon>
        <taxon>Pseudomonadati</taxon>
        <taxon>Pseudomonadota</taxon>
        <taxon>Gammaproteobacteria</taxon>
        <taxon>Pseudomonadales</taxon>
        <taxon>Pseudomonadaceae</taxon>
        <taxon>Pseudomonas</taxon>
        <taxon>Pseudomonas paraeruginosa</taxon>
    </lineage>
</organism>
<accession>A6V1C2</accession>
<sequence length="344" mass="35973">MSQSLFSLAFGVGTQNRQDAWLEVFYALPLLNPSAEIVAAVAPILGYSSGNQALAFTSQQAYQLADALKGIDAAQSALLSRLAESQKPLVATLLAEDAAPSSTPEAYLKLHLLSHRLVKPHGVNLSGIFPLLPNVAWTNIGAVDLAELAELQLEARLKGKLLEVFSVDKFPKMTDYVVPAGVRIADTARVRLGAYIGEGTTVMHEGFVNFNAGTEGPGMIEGRVSAGVFVGKGSDLGGGCSTMGTLSGGGNIVISVGEGCLIGANAGIGIPLGDRNIVEAGLYITAGTKVALLDEQNTLVKVVKARDLAGQPDLLFRRNSQNGAVECKTNKTAIELNEALHAHN</sequence>
<reference key="1">
    <citation type="submission" date="2007-06" db="EMBL/GenBank/DDBJ databases">
        <authorList>
            <person name="Dodson R.J."/>
            <person name="Harkins D."/>
            <person name="Paulsen I.T."/>
        </authorList>
    </citation>
    <scope>NUCLEOTIDE SEQUENCE [LARGE SCALE GENOMIC DNA]</scope>
    <source>
        <strain>DSM 24068 / PA7</strain>
    </source>
</reference>
<feature type="chain" id="PRO_0000412265" description="2,3,4,5-tetrahydropyridine-2,6-dicarboxylate N-succinyltransferase">
    <location>
        <begin position="1"/>
        <end position="344"/>
    </location>
</feature>
<feature type="active site" description="Acyl-anhydride intermediate" evidence="1">
    <location>
        <position position="221"/>
    </location>
</feature>
<feature type="binding site" evidence="1">
    <location>
        <position position="205"/>
    </location>
    <ligand>
        <name>Mg(2+)</name>
        <dbReference type="ChEBI" id="CHEBI:18420"/>
        <label>2</label>
        <note>ligand shared between trimeric partners</note>
    </ligand>
</feature>
<feature type="binding site" evidence="1">
    <location>
        <position position="223"/>
    </location>
    <ligand>
        <name>succinyl-CoA</name>
        <dbReference type="ChEBI" id="CHEBI:57292"/>
    </ligand>
</feature>
<feature type="binding site" evidence="1">
    <location>
        <position position="238"/>
    </location>
    <ligand>
        <name>succinyl-CoA</name>
        <dbReference type="ChEBI" id="CHEBI:57292"/>
    </ligand>
</feature>
<feature type="binding site" evidence="1">
    <location>
        <position position="241"/>
    </location>
    <ligand>
        <name>succinyl-CoA</name>
        <dbReference type="ChEBI" id="CHEBI:57292"/>
    </ligand>
</feature>
<feature type="binding site" evidence="1">
    <location>
        <position position="264"/>
    </location>
    <ligand>
        <name>succinyl-CoA</name>
        <dbReference type="ChEBI" id="CHEBI:57292"/>
    </ligand>
</feature>
<feature type="binding site" evidence="1">
    <location>
        <begin position="279"/>
        <end position="280"/>
    </location>
    <ligand>
        <name>succinyl-CoA</name>
        <dbReference type="ChEBI" id="CHEBI:57292"/>
    </ligand>
</feature>
<feature type="binding site" evidence="1">
    <location>
        <position position="287"/>
    </location>
    <ligand>
        <name>succinyl-CoA</name>
        <dbReference type="ChEBI" id="CHEBI:57292"/>
    </ligand>
</feature>
<feature type="binding site" evidence="1">
    <location>
        <position position="304"/>
    </location>
    <ligand>
        <name>succinyl-CoA</name>
        <dbReference type="ChEBI" id="CHEBI:57292"/>
    </ligand>
</feature>
<feature type="binding site" evidence="1">
    <location>
        <begin position="317"/>
        <end position="320"/>
    </location>
    <ligand>
        <name>succinyl-CoA</name>
        <dbReference type="ChEBI" id="CHEBI:57292"/>
    </ligand>
</feature>
<gene>
    <name evidence="1" type="primary">dapD</name>
    <name type="ordered locus">PSPA7_1473</name>
</gene>
<name>DAPD_PSEP7</name>
<comment type="function">
    <text evidence="1">Catalyzes the conversion of the cyclic tetrahydrodipicolinate (THDP) into the acyclic N-succinyl-L-2-amino-6-oxopimelate using succinyl-CoA.</text>
</comment>
<comment type="catalytic activity">
    <reaction evidence="1">
        <text>(S)-2,3,4,5-tetrahydrodipicolinate + succinyl-CoA + H2O = (S)-2-succinylamino-6-oxoheptanedioate + CoA</text>
        <dbReference type="Rhea" id="RHEA:17325"/>
        <dbReference type="ChEBI" id="CHEBI:15377"/>
        <dbReference type="ChEBI" id="CHEBI:15685"/>
        <dbReference type="ChEBI" id="CHEBI:16845"/>
        <dbReference type="ChEBI" id="CHEBI:57287"/>
        <dbReference type="ChEBI" id="CHEBI:57292"/>
        <dbReference type="EC" id="2.3.1.117"/>
    </reaction>
</comment>
<comment type="pathway">
    <text evidence="1">Amino-acid biosynthesis; L-lysine biosynthesis via DAP pathway; LL-2,6-diaminopimelate from (S)-tetrahydrodipicolinate (succinylase route): step 1/3.</text>
</comment>
<comment type="subunit">
    <text evidence="1">Homotrimer.</text>
</comment>
<comment type="subcellular location">
    <subcellularLocation>
        <location evidence="1">Cytoplasm</location>
    </subcellularLocation>
</comment>
<comment type="similarity">
    <text evidence="1">Belongs to the type 2 tetrahydrodipicolinate N-succinyltransferase family.</text>
</comment>
<protein>
    <recommendedName>
        <fullName evidence="1">2,3,4,5-tetrahydropyridine-2,6-dicarboxylate N-succinyltransferase</fullName>
        <ecNumber evidence="1">2.3.1.117</ecNumber>
    </recommendedName>
    <alternativeName>
        <fullName evidence="1">Tetrahydrodipicolinate N-succinyltransferase</fullName>
        <shortName evidence="1">THDP succinyltransferase</shortName>
        <shortName evidence="1">THP succinyltransferase</shortName>
    </alternativeName>
    <alternativeName>
        <fullName evidence="1">Tetrahydropicolinate succinylase</fullName>
    </alternativeName>
</protein>
<evidence type="ECO:0000255" key="1">
    <source>
        <dbReference type="HAMAP-Rule" id="MF_02122"/>
    </source>
</evidence>